<reference key="1">
    <citation type="journal article" date="2010" name="Genome Biol. Evol.">
        <title>Continuing evolution of Burkholderia mallei through genome reduction and large-scale rearrangements.</title>
        <authorList>
            <person name="Losada L."/>
            <person name="Ronning C.M."/>
            <person name="DeShazer D."/>
            <person name="Woods D."/>
            <person name="Fedorova N."/>
            <person name="Kim H.S."/>
            <person name="Shabalina S.A."/>
            <person name="Pearson T.R."/>
            <person name="Brinkac L."/>
            <person name="Tan P."/>
            <person name="Nandi T."/>
            <person name="Crabtree J."/>
            <person name="Badger J."/>
            <person name="Beckstrom-Sternberg S."/>
            <person name="Saqib M."/>
            <person name="Schutzer S.E."/>
            <person name="Keim P."/>
            <person name="Nierman W.C."/>
        </authorList>
    </citation>
    <scope>NUCLEOTIDE SEQUENCE [LARGE SCALE GENOMIC DNA]</scope>
    <source>
        <strain>1710b</strain>
    </source>
</reference>
<feature type="chain" id="PRO_0000230858" description="Transcriptional repressor NrdR">
    <location>
        <begin position="1"/>
        <end position="159"/>
    </location>
</feature>
<feature type="domain" description="ATP-cone" evidence="1">
    <location>
        <begin position="49"/>
        <end position="139"/>
    </location>
</feature>
<feature type="zinc finger region" evidence="1">
    <location>
        <begin position="3"/>
        <end position="34"/>
    </location>
</feature>
<protein>
    <recommendedName>
        <fullName evidence="1">Transcriptional repressor NrdR</fullName>
    </recommendedName>
</protein>
<proteinExistence type="inferred from homology"/>
<keyword id="KW-0067">ATP-binding</keyword>
<keyword id="KW-0238">DNA-binding</keyword>
<keyword id="KW-0479">Metal-binding</keyword>
<keyword id="KW-0547">Nucleotide-binding</keyword>
<keyword id="KW-0678">Repressor</keyword>
<keyword id="KW-0804">Transcription</keyword>
<keyword id="KW-0805">Transcription regulation</keyword>
<keyword id="KW-0862">Zinc</keyword>
<keyword id="KW-0863">Zinc-finger</keyword>
<name>NRDR_BURP1</name>
<organism>
    <name type="scientific">Burkholderia pseudomallei (strain 1710b)</name>
    <dbReference type="NCBI Taxonomy" id="320372"/>
    <lineage>
        <taxon>Bacteria</taxon>
        <taxon>Pseudomonadati</taxon>
        <taxon>Pseudomonadota</taxon>
        <taxon>Betaproteobacteria</taxon>
        <taxon>Burkholderiales</taxon>
        <taxon>Burkholderiaceae</taxon>
        <taxon>Burkholderia</taxon>
        <taxon>pseudomallei group</taxon>
    </lineage>
</organism>
<comment type="function">
    <text evidence="1">Negatively regulates transcription of bacterial ribonucleotide reductase nrd genes and operons by binding to NrdR-boxes.</text>
</comment>
<comment type="cofactor">
    <cofactor evidence="1">
        <name>Zn(2+)</name>
        <dbReference type="ChEBI" id="CHEBI:29105"/>
    </cofactor>
    <text evidence="1">Binds 1 zinc ion.</text>
</comment>
<comment type="similarity">
    <text evidence="1">Belongs to the NrdR family.</text>
</comment>
<dbReference type="EMBL" id="CP000124">
    <property type="protein sequence ID" value="ABA47660.1"/>
    <property type="molecule type" value="Genomic_DNA"/>
</dbReference>
<dbReference type="RefSeq" id="WP_004185666.1">
    <property type="nucleotide sequence ID" value="NC_007434.1"/>
</dbReference>
<dbReference type="SMR" id="Q3JP82"/>
<dbReference type="EnsemblBacteria" id="ABA47660">
    <property type="protein sequence ID" value="ABA47660"/>
    <property type="gene ID" value="BURPS1710b_3248"/>
</dbReference>
<dbReference type="GeneID" id="93061344"/>
<dbReference type="KEGG" id="bpm:BURPS1710b_3248"/>
<dbReference type="HOGENOM" id="CLU_108412_0_0_4"/>
<dbReference type="Proteomes" id="UP000002700">
    <property type="component" value="Chromosome I"/>
</dbReference>
<dbReference type="GO" id="GO:0005524">
    <property type="term" value="F:ATP binding"/>
    <property type="evidence" value="ECO:0007669"/>
    <property type="project" value="UniProtKB-KW"/>
</dbReference>
<dbReference type="GO" id="GO:0003677">
    <property type="term" value="F:DNA binding"/>
    <property type="evidence" value="ECO:0007669"/>
    <property type="project" value="UniProtKB-KW"/>
</dbReference>
<dbReference type="GO" id="GO:0008270">
    <property type="term" value="F:zinc ion binding"/>
    <property type="evidence" value="ECO:0007669"/>
    <property type="project" value="UniProtKB-UniRule"/>
</dbReference>
<dbReference type="GO" id="GO:0045892">
    <property type="term" value="P:negative regulation of DNA-templated transcription"/>
    <property type="evidence" value="ECO:0007669"/>
    <property type="project" value="UniProtKB-UniRule"/>
</dbReference>
<dbReference type="HAMAP" id="MF_00440">
    <property type="entry name" value="NrdR"/>
    <property type="match status" value="1"/>
</dbReference>
<dbReference type="InterPro" id="IPR005144">
    <property type="entry name" value="ATP-cone_dom"/>
</dbReference>
<dbReference type="InterPro" id="IPR055173">
    <property type="entry name" value="NrdR-like_N"/>
</dbReference>
<dbReference type="InterPro" id="IPR003796">
    <property type="entry name" value="RNR_NrdR-like"/>
</dbReference>
<dbReference type="NCBIfam" id="TIGR00244">
    <property type="entry name" value="transcriptional regulator NrdR"/>
    <property type="match status" value="1"/>
</dbReference>
<dbReference type="PANTHER" id="PTHR30455">
    <property type="entry name" value="TRANSCRIPTIONAL REPRESSOR NRDR"/>
    <property type="match status" value="1"/>
</dbReference>
<dbReference type="PANTHER" id="PTHR30455:SF2">
    <property type="entry name" value="TRANSCRIPTIONAL REPRESSOR NRDR"/>
    <property type="match status" value="1"/>
</dbReference>
<dbReference type="Pfam" id="PF03477">
    <property type="entry name" value="ATP-cone"/>
    <property type="match status" value="1"/>
</dbReference>
<dbReference type="Pfam" id="PF22811">
    <property type="entry name" value="Zn_ribbon_NrdR"/>
    <property type="match status" value="1"/>
</dbReference>
<dbReference type="PROSITE" id="PS51161">
    <property type="entry name" value="ATP_CONE"/>
    <property type="match status" value="1"/>
</dbReference>
<gene>
    <name evidence="1" type="primary">nrdR</name>
    <name type="ordered locus">BURPS1710b_3248</name>
</gene>
<accession>Q3JP82</accession>
<sequence>MRCPFCRHDDTQVVDSRVSEDGAAIRRRRRCSACDKRFTTYERVELALPAVVKKDGSRTEFDRRKIVASMQLALRKRPVAADAIDAAVARIEYQLLASGEREVRSEKLGELVMNELRQLDTIAYVRFASVYRRFEDVSEFEDVIEEFRRAAPAKTPRKR</sequence>
<evidence type="ECO:0000255" key="1">
    <source>
        <dbReference type="HAMAP-Rule" id="MF_00440"/>
    </source>
</evidence>